<reference key="1">
    <citation type="journal article" date="2004" name="Genome Res.">
        <title>The status, quality, and expansion of the NIH full-length cDNA project: the Mammalian Gene Collection (MGC).</title>
        <authorList>
            <consortium name="The MGC Project Team"/>
        </authorList>
    </citation>
    <scope>NUCLEOTIDE SEQUENCE [LARGE SCALE MRNA]</scope>
    <source>
        <tissue>Testis</tissue>
    </source>
</reference>
<reference key="2">
    <citation type="journal article" date="2012" name="Nat. Commun.">
        <title>Quantitative maps of protein phosphorylation sites across 14 different rat organs and tissues.</title>
        <authorList>
            <person name="Lundby A."/>
            <person name="Secher A."/>
            <person name="Lage K."/>
            <person name="Nordsborg N.B."/>
            <person name="Dmytriyev A."/>
            <person name="Lundby C."/>
            <person name="Olsen J.V."/>
        </authorList>
    </citation>
    <scope>PHOSPHORYLATION [LARGE SCALE ANALYSIS] AT SER-152 AND SER-153</scope>
    <scope>IDENTIFICATION BY MASS SPECTROMETRY [LARGE SCALE ANALYSIS]</scope>
</reference>
<sequence>MLIPPFILWDVGYSVYTYGSIFIIALIIWQVKRSHRGLRMGPTKSCAKCFRRIKQTPSDRATRAKRTSKEEAEKLQKLLDTMKSQGWLPQEGSVRRLLCPDPSCSICNAMTLEIQQLLGVENKKTSSSLLRPSRSFSCLEALSPSKSLADRSSELTYQDTRDVSLSSRFPQSQETDQQSTRSATPSIGDAVLQCYHSAPQQQLDPQGSKMTQDAKGLSSSSTDEPGVPANQQKKRKKTKKLALKNQAAPTEVETENKMTFFSHWVNPEVKCDRQEESLVFSKYDTGAKPMTVEPEKTHSPVRDQAEGAEKKKKPECDLKAKPLRAKRNI</sequence>
<protein>
    <recommendedName>
        <fullName>Protein SPATA31F3</fullName>
    </recommendedName>
    <alternativeName>
        <fullName evidence="3">Protein FAM205C</fullName>
    </alternativeName>
</protein>
<evidence type="ECO:0000255" key="1"/>
<evidence type="ECO:0000256" key="2">
    <source>
        <dbReference type="SAM" id="MobiDB-lite"/>
    </source>
</evidence>
<evidence type="ECO:0000305" key="3"/>
<evidence type="ECO:0000312" key="4">
    <source>
        <dbReference type="RGD" id="1561387"/>
    </source>
</evidence>
<evidence type="ECO:0007744" key="5">
    <source>
    </source>
</evidence>
<feature type="chain" id="PRO_0000319054" description="Protein SPATA31F3">
    <location>
        <begin position="1"/>
        <end position="329"/>
    </location>
</feature>
<feature type="transmembrane region" description="Helical" evidence="1">
    <location>
        <begin position="11"/>
        <end position="31"/>
    </location>
</feature>
<feature type="region of interest" description="Disordered" evidence="2">
    <location>
        <begin position="149"/>
        <end position="184"/>
    </location>
</feature>
<feature type="region of interest" description="Disordered" evidence="2">
    <location>
        <begin position="201"/>
        <end position="250"/>
    </location>
</feature>
<feature type="region of interest" description="Disordered" evidence="2">
    <location>
        <begin position="288"/>
        <end position="329"/>
    </location>
</feature>
<feature type="coiled-coil region" evidence="1">
    <location>
        <begin position="58"/>
        <end position="85"/>
    </location>
</feature>
<feature type="compositionally biased region" description="Polar residues" evidence="2">
    <location>
        <begin position="154"/>
        <end position="184"/>
    </location>
</feature>
<feature type="compositionally biased region" description="Polar residues" evidence="2">
    <location>
        <begin position="201"/>
        <end position="223"/>
    </location>
</feature>
<feature type="compositionally biased region" description="Basic residues" evidence="2">
    <location>
        <begin position="232"/>
        <end position="242"/>
    </location>
</feature>
<feature type="compositionally biased region" description="Basic and acidic residues" evidence="2">
    <location>
        <begin position="293"/>
        <end position="320"/>
    </location>
</feature>
<feature type="modified residue" description="Phosphoserine" evidence="5">
    <location>
        <position position="152"/>
    </location>
</feature>
<feature type="modified residue" description="Phosphoserine" evidence="5">
    <location>
        <position position="153"/>
    </location>
</feature>
<name>S31F3_RAT</name>
<comment type="subcellular location">
    <subcellularLocation>
        <location evidence="3">Membrane</location>
        <topology evidence="3">Single-pass membrane protein</topology>
    </subcellularLocation>
</comment>
<comment type="similarity">
    <text evidence="3">Belongs to the SPATA31 family.</text>
</comment>
<accession>Q642A3</accession>
<gene>
    <name evidence="4" type="primary">Spata31f3</name>
    <name type="synonym">Fam205c</name>
</gene>
<organism>
    <name type="scientific">Rattus norvegicus</name>
    <name type="common">Rat</name>
    <dbReference type="NCBI Taxonomy" id="10116"/>
    <lineage>
        <taxon>Eukaryota</taxon>
        <taxon>Metazoa</taxon>
        <taxon>Chordata</taxon>
        <taxon>Craniata</taxon>
        <taxon>Vertebrata</taxon>
        <taxon>Euteleostomi</taxon>
        <taxon>Mammalia</taxon>
        <taxon>Eutheria</taxon>
        <taxon>Euarchontoglires</taxon>
        <taxon>Glires</taxon>
        <taxon>Rodentia</taxon>
        <taxon>Myomorpha</taxon>
        <taxon>Muroidea</taxon>
        <taxon>Muridae</taxon>
        <taxon>Murinae</taxon>
        <taxon>Rattus</taxon>
    </lineage>
</organism>
<keyword id="KW-0175">Coiled coil</keyword>
<keyword id="KW-0472">Membrane</keyword>
<keyword id="KW-0597">Phosphoprotein</keyword>
<keyword id="KW-1185">Reference proteome</keyword>
<keyword id="KW-0812">Transmembrane</keyword>
<keyword id="KW-1133">Transmembrane helix</keyword>
<dbReference type="EMBL" id="BC082005">
    <property type="protein sequence ID" value="AAH82005.1"/>
    <property type="molecule type" value="mRNA"/>
</dbReference>
<dbReference type="RefSeq" id="NP_001019514.2">
    <property type="nucleotide sequence ID" value="NM_001024343.2"/>
</dbReference>
<dbReference type="STRING" id="10116.ENSRNOP00000069401"/>
<dbReference type="GlyGen" id="Q642A3">
    <property type="glycosylation" value="1 site"/>
</dbReference>
<dbReference type="iPTMnet" id="Q642A3"/>
<dbReference type="PhosphoSitePlus" id="Q642A3"/>
<dbReference type="PaxDb" id="10116-ENSRNOP00000038393"/>
<dbReference type="GeneID" id="500445"/>
<dbReference type="KEGG" id="rno:500445"/>
<dbReference type="UCSC" id="RGD:1561387">
    <property type="organism name" value="rat"/>
</dbReference>
<dbReference type="AGR" id="RGD:1561387"/>
<dbReference type="CTD" id="100129969"/>
<dbReference type="RGD" id="1561387">
    <property type="gene designation" value="Spata31f3"/>
</dbReference>
<dbReference type="eggNOG" id="ENOG502THPB">
    <property type="taxonomic scope" value="Eukaryota"/>
</dbReference>
<dbReference type="InParanoid" id="Q642A3"/>
<dbReference type="OrthoDB" id="87362at9989"/>
<dbReference type="PhylomeDB" id="Q642A3"/>
<dbReference type="TreeFam" id="TF337856"/>
<dbReference type="PRO" id="PR:Q642A3"/>
<dbReference type="Proteomes" id="UP000002494">
    <property type="component" value="Unplaced"/>
</dbReference>
<dbReference type="GO" id="GO:0016020">
    <property type="term" value="C:membrane"/>
    <property type="evidence" value="ECO:0007669"/>
    <property type="project" value="UniProtKB-SubCell"/>
</dbReference>
<dbReference type="InterPro" id="IPR027970">
    <property type="entry name" value="SPATA31F3-like"/>
</dbReference>
<dbReference type="PANTHER" id="PTHR21859">
    <property type="entry name" value="ACROSOME-SPECIFIC PROTEIN"/>
    <property type="match status" value="1"/>
</dbReference>
<dbReference type="PANTHER" id="PTHR21859:SF12">
    <property type="entry name" value="SPERMATOGENESIS-ASSOCIATED PROTEIN 31D1"/>
    <property type="match status" value="1"/>
</dbReference>
<dbReference type="Pfam" id="PF15371">
    <property type="entry name" value="DUF4599"/>
    <property type="match status" value="1"/>
</dbReference>
<proteinExistence type="evidence at protein level"/>